<evidence type="ECO:0000255" key="1">
    <source>
        <dbReference type="HAMAP-Rule" id="MF_00567"/>
    </source>
</evidence>
<dbReference type="EC" id="2.5.1.72" evidence="1"/>
<dbReference type="EMBL" id="CP001138">
    <property type="protein sequence ID" value="ACH51373.1"/>
    <property type="molecule type" value="Genomic_DNA"/>
</dbReference>
<dbReference type="RefSeq" id="WP_000115331.1">
    <property type="nucleotide sequence ID" value="NC_011149.1"/>
</dbReference>
<dbReference type="SMR" id="B5F034"/>
<dbReference type="KEGG" id="sea:SeAg_B0792"/>
<dbReference type="HOGENOM" id="CLU_047382_1_0_6"/>
<dbReference type="UniPathway" id="UPA00253">
    <property type="reaction ID" value="UER00327"/>
</dbReference>
<dbReference type="Proteomes" id="UP000008819">
    <property type="component" value="Chromosome"/>
</dbReference>
<dbReference type="GO" id="GO:0005829">
    <property type="term" value="C:cytosol"/>
    <property type="evidence" value="ECO:0007669"/>
    <property type="project" value="TreeGrafter"/>
</dbReference>
<dbReference type="GO" id="GO:0051539">
    <property type="term" value="F:4 iron, 4 sulfur cluster binding"/>
    <property type="evidence" value="ECO:0007669"/>
    <property type="project" value="UniProtKB-KW"/>
</dbReference>
<dbReference type="GO" id="GO:0046872">
    <property type="term" value="F:metal ion binding"/>
    <property type="evidence" value="ECO:0007669"/>
    <property type="project" value="UniProtKB-KW"/>
</dbReference>
<dbReference type="GO" id="GO:0008987">
    <property type="term" value="F:quinolinate synthetase A activity"/>
    <property type="evidence" value="ECO:0007669"/>
    <property type="project" value="UniProtKB-UniRule"/>
</dbReference>
<dbReference type="GO" id="GO:0034628">
    <property type="term" value="P:'de novo' NAD biosynthetic process from L-aspartate"/>
    <property type="evidence" value="ECO:0007669"/>
    <property type="project" value="TreeGrafter"/>
</dbReference>
<dbReference type="FunFam" id="3.40.50.10800:FF:000003">
    <property type="entry name" value="Quinolinate synthase A"/>
    <property type="match status" value="1"/>
</dbReference>
<dbReference type="Gene3D" id="3.40.50.10800">
    <property type="entry name" value="NadA-like"/>
    <property type="match status" value="3"/>
</dbReference>
<dbReference type="HAMAP" id="MF_00567">
    <property type="entry name" value="NadA_type1"/>
    <property type="match status" value="1"/>
</dbReference>
<dbReference type="InterPro" id="IPR003473">
    <property type="entry name" value="NadA"/>
</dbReference>
<dbReference type="InterPro" id="IPR036094">
    <property type="entry name" value="NadA_sf"/>
</dbReference>
<dbReference type="InterPro" id="IPR023513">
    <property type="entry name" value="Quinolinate_synth_A_type1"/>
</dbReference>
<dbReference type="NCBIfam" id="TIGR00550">
    <property type="entry name" value="nadA"/>
    <property type="match status" value="1"/>
</dbReference>
<dbReference type="NCBIfam" id="NF006877">
    <property type="entry name" value="PRK09375.1-1"/>
    <property type="match status" value="1"/>
</dbReference>
<dbReference type="NCBIfam" id="NF006878">
    <property type="entry name" value="PRK09375.1-2"/>
    <property type="match status" value="1"/>
</dbReference>
<dbReference type="PANTHER" id="PTHR30573:SF0">
    <property type="entry name" value="QUINOLINATE SYNTHASE, CHLOROPLASTIC"/>
    <property type="match status" value="1"/>
</dbReference>
<dbReference type="PANTHER" id="PTHR30573">
    <property type="entry name" value="QUINOLINATE SYNTHETASE A"/>
    <property type="match status" value="1"/>
</dbReference>
<dbReference type="Pfam" id="PF02445">
    <property type="entry name" value="NadA"/>
    <property type="match status" value="1"/>
</dbReference>
<dbReference type="SUPFAM" id="SSF142754">
    <property type="entry name" value="NadA-like"/>
    <property type="match status" value="1"/>
</dbReference>
<comment type="function">
    <text evidence="1">Catalyzes the condensation of iminoaspartate with dihydroxyacetone phosphate to form quinolinate.</text>
</comment>
<comment type="catalytic activity">
    <reaction evidence="1">
        <text>iminosuccinate + dihydroxyacetone phosphate = quinolinate + phosphate + 2 H2O + H(+)</text>
        <dbReference type="Rhea" id="RHEA:25888"/>
        <dbReference type="ChEBI" id="CHEBI:15377"/>
        <dbReference type="ChEBI" id="CHEBI:15378"/>
        <dbReference type="ChEBI" id="CHEBI:29959"/>
        <dbReference type="ChEBI" id="CHEBI:43474"/>
        <dbReference type="ChEBI" id="CHEBI:57642"/>
        <dbReference type="ChEBI" id="CHEBI:77875"/>
        <dbReference type="EC" id="2.5.1.72"/>
    </reaction>
    <physiologicalReaction direction="left-to-right" evidence="1">
        <dbReference type="Rhea" id="RHEA:25889"/>
    </physiologicalReaction>
</comment>
<comment type="cofactor">
    <cofactor evidence="1">
        <name>[4Fe-4S] cluster</name>
        <dbReference type="ChEBI" id="CHEBI:49883"/>
    </cofactor>
    <text evidence="1">Binds 1 [4Fe-4S] cluster per subunit.</text>
</comment>
<comment type="pathway">
    <text evidence="1">Cofactor biosynthesis; NAD(+) biosynthesis; quinolinate from iminoaspartate: step 1/1.</text>
</comment>
<comment type="subcellular location">
    <subcellularLocation>
        <location evidence="1">Cytoplasm</location>
    </subcellularLocation>
</comment>
<comment type="similarity">
    <text evidence="1">Belongs to the quinolinate synthase family. Type 1 subfamily.</text>
</comment>
<gene>
    <name evidence="1" type="primary">nadA</name>
    <name type="ordered locus">SeAg_B0792</name>
</gene>
<accession>B5F034</accession>
<reference key="1">
    <citation type="journal article" date="2011" name="J. Bacteriol.">
        <title>Comparative genomics of 28 Salmonella enterica isolates: evidence for CRISPR-mediated adaptive sublineage evolution.</title>
        <authorList>
            <person name="Fricke W.F."/>
            <person name="Mammel M.K."/>
            <person name="McDermott P.F."/>
            <person name="Tartera C."/>
            <person name="White D.G."/>
            <person name="Leclerc J.E."/>
            <person name="Ravel J."/>
            <person name="Cebula T.A."/>
        </authorList>
    </citation>
    <scope>NUCLEOTIDE SEQUENCE [LARGE SCALE GENOMIC DNA]</scope>
    <source>
        <strain>SL483</strain>
    </source>
</reference>
<organism>
    <name type="scientific">Salmonella agona (strain SL483)</name>
    <dbReference type="NCBI Taxonomy" id="454166"/>
    <lineage>
        <taxon>Bacteria</taxon>
        <taxon>Pseudomonadati</taxon>
        <taxon>Pseudomonadota</taxon>
        <taxon>Gammaproteobacteria</taxon>
        <taxon>Enterobacterales</taxon>
        <taxon>Enterobacteriaceae</taxon>
        <taxon>Salmonella</taxon>
    </lineage>
</organism>
<sequence length="347" mass="37886">MSVMFDPQAAIYPFPPKPTPLNDDEKQFYREKIKRLLKERNAVMVAHYYTDPEIQQLAEETGGCISDSLEMARFGAKHAASTLLVAGVRFMGETAKILSPAKTILMPTLAAECSLDLGCPIDEFSAFCDAHPDRTVVVYANTSAAVKARADWVVTSSIAVELIEHLDSLGEKIIWAPDRHLGNYVQKQTGADVLCWQGACIVHDEFKTQALTRLKKIYPDAALLVHPESPQSIVEMADAVGSTSQLIKAAKTLPHRQLIVATDRGIFYKMQQAVPEKELLEAPTAGEGATCRSCAHCPWMAMNGLKAIAEGLEQGGAAHEIQVDAALREGALLPLNRMLDFATTLRA</sequence>
<name>NADA_SALA4</name>
<keyword id="KW-0004">4Fe-4S</keyword>
<keyword id="KW-0963">Cytoplasm</keyword>
<keyword id="KW-0408">Iron</keyword>
<keyword id="KW-0411">Iron-sulfur</keyword>
<keyword id="KW-0479">Metal-binding</keyword>
<keyword id="KW-0662">Pyridine nucleotide biosynthesis</keyword>
<keyword id="KW-0808">Transferase</keyword>
<protein>
    <recommendedName>
        <fullName evidence="1">Quinolinate synthase</fullName>
        <ecNumber evidence="1">2.5.1.72</ecNumber>
    </recommendedName>
</protein>
<proteinExistence type="inferred from homology"/>
<feature type="chain" id="PRO_1000129422" description="Quinolinate synthase">
    <location>
        <begin position="1"/>
        <end position="347"/>
    </location>
</feature>
<feature type="binding site" evidence="1">
    <location>
        <position position="47"/>
    </location>
    <ligand>
        <name>iminosuccinate</name>
        <dbReference type="ChEBI" id="CHEBI:77875"/>
    </ligand>
</feature>
<feature type="binding site" evidence="1">
    <location>
        <position position="68"/>
    </location>
    <ligand>
        <name>iminosuccinate</name>
        <dbReference type="ChEBI" id="CHEBI:77875"/>
    </ligand>
</feature>
<feature type="binding site" evidence="1">
    <location>
        <position position="113"/>
    </location>
    <ligand>
        <name>[4Fe-4S] cluster</name>
        <dbReference type="ChEBI" id="CHEBI:49883"/>
    </ligand>
</feature>
<feature type="binding site" evidence="1">
    <location>
        <begin position="139"/>
        <end position="141"/>
    </location>
    <ligand>
        <name>iminosuccinate</name>
        <dbReference type="ChEBI" id="CHEBI:77875"/>
    </ligand>
</feature>
<feature type="binding site" evidence="1">
    <location>
        <position position="156"/>
    </location>
    <ligand>
        <name>iminosuccinate</name>
        <dbReference type="ChEBI" id="CHEBI:77875"/>
    </ligand>
</feature>
<feature type="binding site" evidence="1">
    <location>
        <position position="200"/>
    </location>
    <ligand>
        <name>[4Fe-4S] cluster</name>
        <dbReference type="ChEBI" id="CHEBI:49883"/>
    </ligand>
</feature>
<feature type="binding site" evidence="1">
    <location>
        <begin position="226"/>
        <end position="228"/>
    </location>
    <ligand>
        <name>iminosuccinate</name>
        <dbReference type="ChEBI" id="CHEBI:77875"/>
    </ligand>
</feature>
<feature type="binding site" evidence="1">
    <location>
        <position position="243"/>
    </location>
    <ligand>
        <name>iminosuccinate</name>
        <dbReference type="ChEBI" id="CHEBI:77875"/>
    </ligand>
</feature>
<feature type="binding site" evidence="1">
    <location>
        <position position="297"/>
    </location>
    <ligand>
        <name>[4Fe-4S] cluster</name>
        <dbReference type="ChEBI" id="CHEBI:49883"/>
    </ligand>
</feature>